<evidence type="ECO:0000250" key="1"/>
<evidence type="ECO:0000255" key="2"/>
<evidence type="ECO:0000256" key="3">
    <source>
        <dbReference type="SAM" id="MobiDB-lite"/>
    </source>
</evidence>
<evidence type="ECO:0000305" key="4"/>
<name>MASY_CUCSA</name>
<sequence>MGSLGMYSESGLTKKGSSRGYDVPEGVDIRGRYDEEFAKILNKEALLFIADLQRTFRNHIKYSMECRREAKRRYNEGGLPGFDPATKYIRDSEWTCAPVPPAVADRRVEITGPVERKMIINALNSGAKVFMADFEDALSPNWENLMRGQINLKDAVDGTISFHDRVRNRVYKLNDRTAKLFVRPRGWHLPEAHIFIDGEPATGCLVDFGLYFFHNHANFRRSQGQGYGPFFYLPKMEHSREAKIWNSVFERAEKMAGIERGSIRATVLIETLPAVFQMNEILYELRDHSVGLNCGRWDYIFSYVKTFQAHPDRLLPDRVLVGMTQHFMRSYSDLLIRTCHRRGVHAMGGMAAQIPIRDDPKANEVALELVRKDKLREVKAGHDGTWAAHPGLIPACMEVFTNNMGNAPNQIRSMRRDDAANLTEEDLLQQPRGVRTMEGLRLNTRVGIQYLAAWLTGAGSVPLYNLAEDAATAEISRVQNWQWLKYGVELDGDGLGVRVNKELFGRVVEEEMERIEREVGKERFKKGMYKEACKMFTRQCTAPNLDDFLTLDAYNYIVIHHPRELSKL</sequence>
<dbReference type="EC" id="2.3.3.9"/>
<dbReference type="EMBL" id="X15425">
    <property type="protein sequence ID" value="CAA33465.1"/>
    <property type="molecule type" value="Genomic_DNA"/>
</dbReference>
<dbReference type="EMBL" id="M16219">
    <property type="protein sequence ID" value="AAA33123.1"/>
    <property type="molecule type" value="mRNA"/>
</dbReference>
<dbReference type="PIR" id="S07550">
    <property type="entry name" value="SYKVMA"/>
</dbReference>
<dbReference type="SMR" id="P08216"/>
<dbReference type="eggNOG" id="KOG1261">
    <property type="taxonomic scope" value="Eukaryota"/>
</dbReference>
<dbReference type="UniPathway" id="UPA00703">
    <property type="reaction ID" value="UER00720"/>
</dbReference>
<dbReference type="GO" id="GO:0009514">
    <property type="term" value="C:glyoxysome"/>
    <property type="evidence" value="ECO:0007669"/>
    <property type="project" value="UniProtKB-SubCell"/>
</dbReference>
<dbReference type="GO" id="GO:0004474">
    <property type="term" value="F:malate synthase activity"/>
    <property type="evidence" value="ECO:0007669"/>
    <property type="project" value="UniProtKB-EC"/>
</dbReference>
<dbReference type="GO" id="GO:0006097">
    <property type="term" value="P:glyoxylate cycle"/>
    <property type="evidence" value="ECO:0007669"/>
    <property type="project" value="UniProtKB-UniPathway"/>
</dbReference>
<dbReference type="GO" id="GO:0006099">
    <property type="term" value="P:tricarboxylic acid cycle"/>
    <property type="evidence" value="ECO:0007669"/>
    <property type="project" value="UniProtKB-KW"/>
</dbReference>
<dbReference type="CDD" id="cd00727">
    <property type="entry name" value="malate_synt_A"/>
    <property type="match status" value="1"/>
</dbReference>
<dbReference type="FunFam" id="1.20.1220.12:FF:000001">
    <property type="entry name" value="Malate synthase"/>
    <property type="match status" value="1"/>
</dbReference>
<dbReference type="FunFam" id="3.20.20.360:FF:000001">
    <property type="entry name" value="Malate synthase"/>
    <property type="match status" value="1"/>
</dbReference>
<dbReference type="Gene3D" id="3.20.20.360">
    <property type="entry name" value="Malate synthase, domain 3"/>
    <property type="match status" value="1"/>
</dbReference>
<dbReference type="Gene3D" id="1.20.1220.12">
    <property type="entry name" value="Malate synthase, domain III"/>
    <property type="match status" value="1"/>
</dbReference>
<dbReference type="InterPro" id="IPR044856">
    <property type="entry name" value="Malate_synth_C_sf"/>
</dbReference>
<dbReference type="InterPro" id="IPR011076">
    <property type="entry name" value="Malate_synth_sf"/>
</dbReference>
<dbReference type="InterPro" id="IPR006252">
    <property type="entry name" value="Malate_synthA"/>
</dbReference>
<dbReference type="InterPro" id="IPR019830">
    <property type="entry name" value="Malate_synthase_CS"/>
</dbReference>
<dbReference type="InterPro" id="IPR001465">
    <property type="entry name" value="Malate_synthase_TIM"/>
</dbReference>
<dbReference type="InterPro" id="IPR048355">
    <property type="entry name" value="MS_C"/>
</dbReference>
<dbReference type="InterPro" id="IPR048356">
    <property type="entry name" value="MS_N"/>
</dbReference>
<dbReference type="InterPro" id="IPR046363">
    <property type="entry name" value="MS_N_TIM-barrel_dom"/>
</dbReference>
<dbReference type="NCBIfam" id="TIGR01344">
    <property type="entry name" value="malate_syn_A"/>
    <property type="match status" value="1"/>
</dbReference>
<dbReference type="PANTHER" id="PTHR42902">
    <property type="entry name" value="MALATE SYNTHASE"/>
    <property type="match status" value="1"/>
</dbReference>
<dbReference type="PANTHER" id="PTHR42902:SF1">
    <property type="entry name" value="MALATE SYNTHASE 1-RELATED"/>
    <property type="match status" value="1"/>
</dbReference>
<dbReference type="Pfam" id="PF20659">
    <property type="entry name" value="MS_C"/>
    <property type="match status" value="1"/>
</dbReference>
<dbReference type="Pfam" id="PF20656">
    <property type="entry name" value="MS_N"/>
    <property type="match status" value="1"/>
</dbReference>
<dbReference type="Pfam" id="PF01274">
    <property type="entry name" value="MS_TIM-barrel"/>
    <property type="match status" value="1"/>
</dbReference>
<dbReference type="PIRSF" id="PIRSF001363">
    <property type="entry name" value="Malate_synth"/>
    <property type="match status" value="1"/>
</dbReference>
<dbReference type="SUPFAM" id="SSF51645">
    <property type="entry name" value="Malate synthase G"/>
    <property type="match status" value="1"/>
</dbReference>
<dbReference type="PROSITE" id="PS00510">
    <property type="entry name" value="MALATE_SYNTHASE"/>
    <property type="match status" value="1"/>
</dbReference>
<protein>
    <recommendedName>
        <fullName>Malate synthase, glyoxysomal</fullName>
        <ecNumber>2.3.3.9</ecNumber>
    </recommendedName>
</protein>
<comment type="catalytic activity">
    <reaction>
        <text>glyoxylate + acetyl-CoA + H2O = (S)-malate + CoA + H(+)</text>
        <dbReference type="Rhea" id="RHEA:18181"/>
        <dbReference type="ChEBI" id="CHEBI:15377"/>
        <dbReference type="ChEBI" id="CHEBI:15378"/>
        <dbReference type="ChEBI" id="CHEBI:15589"/>
        <dbReference type="ChEBI" id="CHEBI:36655"/>
        <dbReference type="ChEBI" id="CHEBI:57287"/>
        <dbReference type="ChEBI" id="CHEBI:57288"/>
        <dbReference type="EC" id="2.3.3.9"/>
    </reaction>
</comment>
<comment type="pathway">
    <text>Carbohydrate metabolism; glyoxylate cycle; (S)-malate from isocitrate: step 2/2.</text>
</comment>
<comment type="subcellular location">
    <subcellularLocation>
        <location>Glyoxysome</location>
    </subcellularLocation>
</comment>
<comment type="similarity">
    <text evidence="4">Belongs to the malate synthase family.</text>
</comment>
<accession>P08216</accession>
<keyword id="KW-0329">Glyoxylate bypass</keyword>
<keyword id="KW-0330">Glyoxysome</keyword>
<keyword id="KW-0576">Peroxisome</keyword>
<keyword id="KW-0808">Transferase</keyword>
<keyword id="KW-0816">Tricarboxylic acid cycle</keyword>
<feature type="chain" id="PRO_0000166868" description="Malate synthase, glyoxysomal">
    <location>
        <begin position="1"/>
        <end position="568"/>
    </location>
</feature>
<feature type="region of interest" description="Disordered" evidence="3">
    <location>
        <begin position="1"/>
        <end position="20"/>
    </location>
</feature>
<feature type="short sequence motif" description="Microbody targeting signal" evidence="2">
    <location>
        <begin position="566"/>
        <end position="568"/>
    </location>
</feature>
<feature type="active site" description="Proton acceptor" evidence="1">
    <location>
        <position position="183"/>
    </location>
</feature>
<feature type="active site" description="Proton donor" evidence="1">
    <location>
        <position position="469"/>
    </location>
</feature>
<feature type="sequence conflict" description="In Ref. 2." evidence="4" ref="2">
    <original>I</original>
    <variation>G</variation>
    <location>
        <position position="475"/>
    </location>
</feature>
<organism>
    <name type="scientific">Cucumis sativus</name>
    <name type="common">Cucumber</name>
    <dbReference type="NCBI Taxonomy" id="3659"/>
    <lineage>
        <taxon>Eukaryota</taxon>
        <taxon>Viridiplantae</taxon>
        <taxon>Streptophyta</taxon>
        <taxon>Embryophyta</taxon>
        <taxon>Tracheophyta</taxon>
        <taxon>Spermatophyta</taxon>
        <taxon>Magnoliopsida</taxon>
        <taxon>eudicotyledons</taxon>
        <taxon>Gunneridae</taxon>
        <taxon>Pentapetalae</taxon>
        <taxon>rosids</taxon>
        <taxon>fabids</taxon>
        <taxon>Cucurbitales</taxon>
        <taxon>Cucurbitaceae</taxon>
        <taxon>Benincaseae</taxon>
        <taxon>Cucumis</taxon>
    </lineage>
</organism>
<reference key="1">
    <citation type="journal article" date="1989" name="Plant Mol. Biol.">
        <title>The malate synthase gene of cucumber.</title>
        <authorList>
            <person name="Graham I.A."/>
            <person name="Smith L.M."/>
            <person name="Brown J.W.S."/>
            <person name="Leaver C.J."/>
            <person name="Smith S.M."/>
        </authorList>
    </citation>
    <scope>NUCLEOTIDE SEQUENCE [GENOMIC DNA]</scope>
    <source>
        <strain>cv. Long green ridge</strain>
    </source>
</reference>
<reference key="2">
    <citation type="journal article" date="1986" name="Plant Physiol.">
        <title>Glyoxysomal malate synthase of cucumber: molecular cloning of a cDNA and regulation of enzyme synthesis during germination.</title>
        <authorList>
            <person name="Smith S.M."/>
            <person name="Leaver C.J."/>
        </authorList>
    </citation>
    <scope>NUCLEOTIDE SEQUENCE [MRNA] OF 475-568</scope>
</reference>
<proteinExistence type="evidence at transcript level"/>